<dbReference type="EC" id="2.4.1.227" evidence="1"/>
<dbReference type="EMBL" id="CP000253">
    <property type="protein sequence ID" value="ABD30517.1"/>
    <property type="molecule type" value="Genomic_DNA"/>
</dbReference>
<dbReference type="RefSeq" id="WP_000160904.1">
    <property type="nucleotide sequence ID" value="NZ_LS483365.1"/>
</dbReference>
<dbReference type="RefSeq" id="YP_499950.1">
    <property type="nucleotide sequence ID" value="NC_007795.1"/>
</dbReference>
<dbReference type="SMR" id="Q2FYL5"/>
<dbReference type="STRING" id="93061.SAOUHSC_01424"/>
<dbReference type="CAZy" id="GT28">
    <property type="family name" value="Glycosyltransferase Family 28"/>
</dbReference>
<dbReference type="PaxDb" id="1280-SAXN108_1439"/>
<dbReference type="GeneID" id="3920655"/>
<dbReference type="KEGG" id="sao:SAOUHSC_01424"/>
<dbReference type="PATRIC" id="fig|93061.5.peg.1302"/>
<dbReference type="eggNOG" id="COG0707">
    <property type="taxonomic scope" value="Bacteria"/>
</dbReference>
<dbReference type="HOGENOM" id="CLU_037404_0_0_9"/>
<dbReference type="OrthoDB" id="9808936at2"/>
<dbReference type="UniPathway" id="UPA00219"/>
<dbReference type="PRO" id="PR:Q2FYL5"/>
<dbReference type="Proteomes" id="UP000008816">
    <property type="component" value="Chromosome"/>
</dbReference>
<dbReference type="GO" id="GO:0005886">
    <property type="term" value="C:plasma membrane"/>
    <property type="evidence" value="ECO:0007669"/>
    <property type="project" value="UniProtKB-SubCell"/>
</dbReference>
<dbReference type="GO" id="GO:0016757">
    <property type="term" value="F:glycosyltransferase activity"/>
    <property type="evidence" value="ECO:0000318"/>
    <property type="project" value="GO_Central"/>
</dbReference>
<dbReference type="GO" id="GO:0050511">
    <property type="term" value="F:undecaprenyldiphospho-muramoylpentapeptide beta-N-acetylglucosaminyltransferase activity"/>
    <property type="evidence" value="ECO:0007669"/>
    <property type="project" value="UniProtKB-UniRule"/>
</dbReference>
<dbReference type="GO" id="GO:0005975">
    <property type="term" value="P:carbohydrate metabolic process"/>
    <property type="evidence" value="ECO:0007669"/>
    <property type="project" value="InterPro"/>
</dbReference>
<dbReference type="GO" id="GO:0051301">
    <property type="term" value="P:cell division"/>
    <property type="evidence" value="ECO:0007669"/>
    <property type="project" value="UniProtKB-KW"/>
</dbReference>
<dbReference type="GO" id="GO:0071555">
    <property type="term" value="P:cell wall organization"/>
    <property type="evidence" value="ECO:0007669"/>
    <property type="project" value="UniProtKB-KW"/>
</dbReference>
<dbReference type="GO" id="GO:0030259">
    <property type="term" value="P:lipid glycosylation"/>
    <property type="evidence" value="ECO:0007669"/>
    <property type="project" value="UniProtKB-UniRule"/>
</dbReference>
<dbReference type="GO" id="GO:0009252">
    <property type="term" value="P:peptidoglycan biosynthetic process"/>
    <property type="evidence" value="ECO:0007669"/>
    <property type="project" value="UniProtKB-UniRule"/>
</dbReference>
<dbReference type="GO" id="GO:0008360">
    <property type="term" value="P:regulation of cell shape"/>
    <property type="evidence" value="ECO:0007669"/>
    <property type="project" value="UniProtKB-KW"/>
</dbReference>
<dbReference type="CDD" id="cd03785">
    <property type="entry name" value="GT28_MurG"/>
    <property type="match status" value="1"/>
</dbReference>
<dbReference type="Gene3D" id="3.40.50.2000">
    <property type="entry name" value="Glycogen Phosphorylase B"/>
    <property type="match status" value="2"/>
</dbReference>
<dbReference type="HAMAP" id="MF_00033">
    <property type="entry name" value="MurG"/>
    <property type="match status" value="1"/>
</dbReference>
<dbReference type="InterPro" id="IPR006009">
    <property type="entry name" value="GlcNAc_MurG"/>
</dbReference>
<dbReference type="InterPro" id="IPR007235">
    <property type="entry name" value="Glyco_trans_28_C"/>
</dbReference>
<dbReference type="InterPro" id="IPR004276">
    <property type="entry name" value="GlycoTrans_28_N"/>
</dbReference>
<dbReference type="NCBIfam" id="NF009102">
    <property type="entry name" value="PRK12446.1"/>
    <property type="match status" value="1"/>
</dbReference>
<dbReference type="PANTHER" id="PTHR21015:SF27">
    <property type="entry name" value="UDP-N-ACETYLGLUCOSAMINE--N-ACETYLMURAMYL-(PENTAPEPTIDE) PYROPHOSPHORYL-UNDECAPRENOL N-ACETYLGLUCOSAMINE TRANSFERASE"/>
    <property type="match status" value="1"/>
</dbReference>
<dbReference type="PANTHER" id="PTHR21015">
    <property type="entry name" value="UDP-N-ACETYLGLUCOSAMINE--N-ACETYLMURAMYL-(PENTAPEPTIDE) PYROPHOSPHORYL-UNDECAPRENOL N-ACETYLGLUCOSAMINE TRANSFERASE 1"/>
    <property type="match status" value="1"/>
</dbReference>
<dbReference type="Pfam" id="PF04101">
    <property type="entry name" value="Glyco_tran_28_C"/>
    <property type="match status" value="1"/>
</dbReference>
<dbReference type="Pfam" id="PF03033">
    <property type="entry name" value="Glyco_transf_28"/>
    <property type="match status" value="1"/>
</dbReference>
<dbReference type="SUPFAM" id="SSF53756">
    <property type="entry name" value="UDP-Glycosyltransferase/glycogen phosphorylase"/>
    <property type="match status" value="1"/>
</dbReference>
<gene>
    <name evidence="1" type="primary">murG</name>
    <name type="ordered locus">SAOUHSC_01424</name>
</gene>
<proteinExistence type="inferred from homology"/>
<accession>Q2FYL5</accession>
<organism>
    <name type="scientific">Staphylococcus aureus (strain NCTC 8325 / PS 47)</name>
    <dbReference type="NCBI Taxonomy" id="93061"/>
    <lineage>
        <taxon>Bacteria</taxon>
        <taxon>Bacillati</taxon>
        <taxon>Bacillota</taxon>
        <taxon>Bacilli</taxon>
        <taxon>Bacillales</taxon>
        <taxon>Staphylococcaceae</taxon>
        <taxon>Staphylococcus</taxon>
    </lineage>
</organism>
<feature type="chain" id="PRO_0000315174" description="UDP-N-acetylglucosamine--N-acetylmuramyl-(pentapeptide) pyrophosphoryl-undecaprenol N-acetylglucosamine transferase">
    <location>
        <begin position="1"/>
        <end position="356"/>
    </location>
</feature>
<feature type="binding site" evidence="1">
    <location>
        <position position="166"/>
    </location>
    <ligand>
        <name>UDP-N-acetyl-alpha-D-glucosamine</name>
        <dbReference type="ChEBI" id="CHEBI:57705"/>
    </ligand>
</feature>
<feature type="binding site" evidence="1">
    <location>
        <position position="196"/>
    </location>
    <ligand>
        <name>UDP-N-acetyl-alpha-D-glucosamine</name>
        <dbReference type="ChEBI" id="CHEBI:57705"/>
    </ligand>
</feature>
<feature type="binding site" evidence="1">
    <location>
        <position position="290"/>
    </location>
    <ligand>
        <name>UDP-N-acetyl-alpha-D-glucosamine</name>
        <dbReference type="ChEBI" id="CHEBI:57705"/>
    </ligand>
</feature>
<evidence type="ECO:0000255" key="1">
    <source>
        <dbReference type="HAMAP-Rule" id="MF_00033"/>
    </source>
</evidence>
<name>MURG_STAA8</name>
<keyword id="KW-0131">Cell cycle</keyword>
<keyword id="KW-0132">Cell division</keyword>
<keyword id="KW-1003">Cell membrane</keyword>
<keyword id="KW-0133">Cell shape</keyword>
<keyword id="KW-0961">Cell wall biogenesis/degradation</keyword>
<keyword id="KW-0328">Glycosyltransferase</keyword>
<keyword id="KW-0472">Membrane</keyword>
<keyword id="KW-0573">Peptidoglycan synthesis</keyword>
<keyword id="KW-1185">Reference proteome</keyword>
<keyword id="KW-0808">Transferase</keyword>
<sequence length="356" mass="39697">MTKIAFTGGGTVGHVSVNLSLIPTALSQGYEALYIGSKNGIEREMIESQLPEIKYYPISSGKLRRYISLENAKDVFKVLKGILDARKVLKKEKPDLLFSKGGFVSVPVVIAAKSLNIPTIIHESDLTPGLANKIALKFAKKIYTTFEETLNYLPKEKADFIGATIREDLKNGNAHNGYQLTGFNENKKVLLVMGGSLGSKKLNSIIRENLDALLQQYQVIHLTGKGLKDAQVKKSGYIQYEFVKEDLTDLLAITDTVISRAGSNAIYEFLTLRIPMLLVPLGLDQSRGDQIDNANHFADKGYAKAIDEEQLTAQILLQELNEMEQERTRIINNMKSYEQSYTKEALFDKMIKDALN</sequence>
<reference key="1">
    <citation type="book" date="2006" name="Gram positive pathogens, 2nd edition">
        <title>The Staphylococcus aureus NCTC 8325 genome.</title>
        <editorList>
            <person name="Fischetti V."/>
            <person name="Novick R."/>
            <person name="Ferretti J."/>
            <person name="Portnoy D."/>
            <person name="Rood J."/>
        </editorList>
        <authorList>
            <person name="Gillaspy A.F."/>
            <person name="Worrell V."/>
            <person name="Orvis J."/>
            <person name="Roe B.A."/>
            <person name="Dyer D.W."/>
            <person name="Iandolo J.J."/>
        </authorList>
    </citation>
    <scope>NUCLEOTIDE SEQUENCE [LARGE SCALE GENOMIC DNA]</scope>
    <source>
        <strain>NCTC 8325 / PS 47</strain>
    </source>
</reference>
<protein>
    <recommendedName>
        <fullName evidence="1">UDP-N-acetylglucosamine--N-acetylmuramyl-(pentapeptide) pyrophosphoryl-undecaprenol N-acetylglucosamine transferase</fullName>
        <ecNumber evidence="1">2.4.1.227</ecNumber>
    </recommendedName>
    <alternativeName>
        <fullName evidence="1">Undecaprenyl-PP-MurNAc-pentapeptide-UDPGlcNAc GlcNAc transferase</fullName>
    </alternativeName>
</protein>
<comment type="function">
    <text evidence="1">Cell wall formation. Catalyzes the transfer of a GlcNAc subunit on undecaprenyl-pyrophosphoryl-MurNAc-pentapeptide (lipid intermediate I) to form undecaprenyl-pyrophosphoryl-MurNAc-(pentapeptide)GlcNAc (lipid intermediate II).</text>
</comment>
<comment type="catalytic activity">
    <reaction evidence="1">
        <text>Mur2Ac(oyl-L-Ala-gamma-D-Glu-L-Lys-D-Ala-D-Ala)-di-trans,octa-cis-undecaprenyl diphosphate + UDP-N-acetyl-alpha-D-glucosamine = beta-D-GlcNAc-(1-&gt;4)-Mur2Ac(oyl-L-Ala-gamma-D-Glu-L-Lys-D-Ala-D-Ala)-di-trans,octa-cis-undecaprenyl diphosphate + UDP + H(+)</text>
        <dbReference type="Rhea" id="RHEA:23192"/>
        <dbReference type="ChEBI" id="CHEBI:15378"/>
        <dbReference type="ChEBI" id="CHEBI:57705"/>
        <dbReference type="ChEBI" id="CHEBI:58223"/>
        <dbReference type="ChEBI" id="CHEBI:60032"/>
        <dbReference type="ChEBI" id="CHEBI:60033"/>
        <dbReference type="EC" id="2.4.1.227"/>
    </reaction>
</comment>
<comment type="pathway">
    <text evidence="1">Cell wall biogenesis; peptidoglycan biosynthesis.</text>
</comment>
<comment type="subcellular location">
    <subcellularLocation>
        <location evidence="1">Cell membrane</location>
        <topology evidence="1">Peripheral membrane protein</topology>
        <orientation evidence="1">Cytoplasmic side</orientation>
    </subcellularLocation>
</comment>
<comment type="similarity">
    <text evidence="1">Belongs to the glycosyltransferase 28 family. MurG subfamily.</text>
</comment>